<name>NDUF4_DROME</name>
<evidence type="ECO:0000269" key="1">
    <source>
    </source>
</evidence>
<evidence type="ECO:0000303" key="2">
    <source>
    </source>
</evidence>
<evidence type="ECO:0000305" key="3"/>
<evidence type="ECO:0000312" key="4">
    <source>
        <dbReference type="FlyBase" id="FBgn0037777"/>
    </source>
</evidence>
<evidence type="ECO:0000312" key="5">
    <source>
        <dbReference type="Proteomes" id="UP000000803"/>
    </source>
</evidence>
<keyword id="KW-1185">Reference proteome</keyword>
<proteinExistence type="evidence at protein level"/>
<reference key="1">
    <citation type="journal article" date="2000" name="Science">
        <title>The genome sequence of Drosophila melanogaster.</title>
        <authorList>
            <person name="Adams M.D."/>
            <person name="Celniker S.E."/>
            <person name="Holt R.A."/>
            <person name="Evans C.A."/>
            <person name="Gocayne J.D."/>
            <person name="Amanatides P.G."/>
            <person name="Scherer S.E."/>
            <person name="Li P.W."/>
            <person name="Hoskins R.A."/>
            <person name="Galle R.F."/>
            <person name="George R.A."/>
            <person name="Lewis S.E."/>
            <person name="Richards S."/>
            <person name="Ashburner M."/>
            <person name="Henderson S.N."/>
            <person name="Sutton G.G."/>
            <person name="Wortman J.R."/>
            <person name="Yandell M.D."/>
            <person name="Zhang Q."/>
            <person name="Chen L.X."/>
            <person name="Brandon R.C."/>
            <person name="Rogers Y.-H.C."/>
            <person name="Blazej R.G."/>
            <person name="Champe M."/>
            <person name="Pfeiffer B.D."/>
            <person name="Wan K.H."/>
            <person name="Doyle C."/>
            <person name="Baxter E.G."/>
            <person name="Helt G."/>
            <person name="Nelson C.R."/>
            <person name="Miklos G.L.G."/>
            <person name="Abril J.F."/>
            <person name="Agbayani A."/>
            <person name="An H.-J."/>
            <person name="Andrews-Pfannkoch C."/>
            <person name="Baldwin D."/>
            <person name="Ballew R.M."/>
            <person name="Basu A."/>
            <person name="Baxendale J."/>
            <person name="Bayraktaroglu L."/>
            <person name="Beasley E.M."/>
            <person name="Beeson K.Y."/>
            <person name="Benos P.V."/>
            <person name="Berman B.P."/>
            <person name="Bhandari D."/>
            <person name="Bolshakov S."/>
            <person name="Borkova D."/>
            <person name="Botchan M.R."/>
            <person name="Bouck J."/>
            <person name="Brokstein P."/>
            <person name="Brottier P."/>
            <person name="Burtis K.C."/>
            <person name="Busam D.A."/>
            <person name="Butler H."/>
            <person name="Cadieu E."/>
            <person name="Center A."/>
            <person name="Chandra I."/>
            <person name="Cherry J.M."/>
            <person name="Cawley S."/>
            <person name="Dahlke C."/>
            <person name="Davenport L.B."/>
            <person name="Davies P."/>
            <person name="de Pablos B."/>
            <person name="Delcher A."/>
            <person name="Deng Z."/>
            <person name="Mays A.D."/>
            <person name="Dew I."/>
            <person name="Dietz S.M."/>
            <person name="Dodson K."/>
            <person name="Doup L.E."/>
            <person name="Downes M."/>
            <person name="Dugan-Rocha S."/>
            <person name="Dunkov B.C."/>
            <person name="Dunn P."/>
            <person name="Durbin K.J."/>
            <person name="Evangelista C.C."/>
            <person name="Ferraz C."/>
            <person name="Ferriera S."/>
            <person name="Fleischmann W."/>
            <person name="Fosler C."/>
            <person name="Gabrielian A.E."/>
            <person name="Garg N.S."/>
            <person name="Gelbart W.M."/>
            <person name="Glasser K."/>
            <person name="Glodek A."/>
            <person name="Gong F."/>
            <person name="Gorrell J.H."/>
            <person name="Gu Z."/>
            <person name="Guan P."/>
            <person name="Harris M."/>
            <person name="Harris N.L."/>
            <person name="Harvey D.A."/>
            <person name="Heiman T.J."/>
            <person name="Hernandez J.R."/>
            <person name="Houck J."/>
            <person name="Hostin D."/>
            <person name="Houston K.A."/>
            <person name="Howland T.J."/>
            <person name="Wei M.-H."/>
            <person name="Ibegwam C."/>
            <person name="Jalali M."/>
            <person name="Kalush F."/>
            <person name="Karpen G.H."/>
            <person name="Ke Z."/>
            <person name="Kennison J.A."/>
            <person name="Ketchum K.A."/>
            <person name="Kimmel B.E."/>
            <person name="Kodira C.D."/>
            <person name="Kraft C.L."/>
            <person name="Kravitz S."/>
            <person name="Kulp D."/>
            <person name="Lai Z."/>
            <person name="Lasko P."/>
            <person name="Lei Y."/>
            <person name="Levitsky A.A."/>
            <person name="Li J.H."/>
            <person name="Li Z."/>
            <person name="Liang Y."/>
            <person name="Lin X."/>
            <person name="Liu X."/>
            <person name="Mattei B."/>
            <person name="McIntosh T.C."/>
            <person name="McLeod M.P."/>
            <person name="McPherson D."/>
            <person name="Merkulov G."/>
            <person name="Milshina N.V."/>
            <person name="Mobarry C."/>
            <person name="Morris J."/>
            <person name="Moshrefi A."/>
            <person name="Mount S.M."/>
            <person name="Moy M."/>
            <person name="Murphy B."/>
            <person name="Murphy L."/>
            <person name="Muzny D.M."/>
            <person name="Nelson D.L."/>
            <person name="Nelson D.R."/>
            <person name="Nelson K.A."/>
            <person name="Nixon K."/>
            <person name="Nusskern D.R."/>
            <person name="Pacleb J.M."/>
            <person name="Palazzolo M."/>
            <person name="Pittman G.S."/>
            <person name="Pan S."/>
            <person name="Pollard J."/>
            <person name="Puri V."/>
            <person name="Reese M.G."/>
            <person name="Reinert K."/>
            <person name="Remington K."/>
            <person name="Saunders R.D.C."/>
            <person name="Scheeler F."/>
            <person name="Shen H."/>
            <person name="Shue B.C."/>
            <person name="Siden-Kiamos I."/>
            <person name="Simpson M."/>
            <person name="Skupski M.P."/>
            <person name="Smith T.J."/>
            <person name="Spier E."/>
            <person name="Spradling A.C."/>
            <person name="Stapleton M."/>
            <person name="Strong R."/>
            <person name="Sun E."/>
            <person name="Svirskas R."/>
            <person name="Tector C."/>
            <person name="Turner R."/>
            <person name="Venter E."/>
            <person name="Wang A.H."/>
            <person name="Wang X."/>
            <person name="Wang Z.-Y."/>
            <person name="Wassarman D.A."/>
            <person name="Weinstock G.M."/>
            <person name="Weissenbach J."/>
            <person name="Williams S.M."/>
            <person name="Woodage T."/>
            <person name="Worley K.C."/>
            <person name="Wu D."/>
            <person name="Yang S."/>
            <person name="Yao Q.A."/>
            <person name="Ye J."/>
            <person name="Yeh R.-F."/>
            <person name="Zaveri J.S."/>
            <person name="Zhan M."/>
            <person name="Zhang G."/>
            <person name="Zhao Q."/>
            <person name="Zheng L."/>
            <person name="Zheng X.H."/>
            <person name="Zhong F.N."/>
            <person name="Zhong W."/>
            <person name="Zhou X."/>
            <person name="Zhu S.C."/>
            <person name="Zhu X."/>
            <person name="Smith H.O."/>
            <person name="Gibbs R.A."/>
            <person name="Myers E.W."/>
            <person name="Rubin G.M."/>
            <person name="Venter J.C."/>
        </authorList>
    </citation>
    <scope>NUCLEOTIDE SEQUENCE [LARGE SCALE GENOMIC DNA]</scope>
    <source>
        <strain>Berkeley</strain>
    </source>
</reference>
<reference key="2">
    <citation type="journal article" date="2002" name="Genome Biol.">
        <title>Annotation of the Drosophila melanogaster euchromatic genome: a systematic review.</title>
        <authorList>
            <person name="Misra S."/>
            <person name="Crosby M.A."/>
            <person name="Mungall C.J."/>
            <person name="Matthews B.B."/>
            <person name="Campbell K.S."/>
            <person name="Hradecky P."/>
            <person name="Huang Y."/>
            <person name="Kaminker J.S."/>
            <person name="Millburn G.H."/>
            <person name="Prochnik S.E."/>
            <person name="Smith C.D."/>
            <person name="Tupy J.L."/>
            <person name="Whitfield E.J."/>
            <person name="Bayraktaroglu L."/>
            <person name="Berman B.P."/>
            <person name="Bettencourt B.R."/>
            <person name="Celniker S.E."/>
            <person name="de Grey A.D.N.J."/>
            <person name="Drysdale R.A."/>
            <person name="Harris N.L."/>
            <person name="Richter J."/>
            <person name="Russo S."/>
            <person name="Schroeder A.J."/>
            <person name="Shu S.Q."/>
            <person name="Stapleton M."/>
            <person name="Yamada C."/>
            <person name="Ashburner M."/>
            <person name="Gelbart W.M."/>
            <person name="Rubin G.M."/>
            <person name="Lewis S.E."/>
        </authorList>
    </citation>
    <scope>GENOME REANNOTATION</scope>
    <source>
        <strain>Berkeley</strain>
    </source>
</reference>
<reference key="3">
    <citation type="journal article" date="2002" name="Genome Biol.">
        <title>A Drosophila full-length cDNA resource.</title>
        <authorList>
            <person name="Stapleton M."/>
            <person name="Carlson J.W."/>
            <person name="Brokstein P."/>
            <person name="Yu C."/>
            <person name="Champe M."/>
            <person name="George R.A."/>
            <person name="Guarin H."/>
            <person name="Kronmiller B."/>
            <person name="Pacleb J.M."/>
            <person name="Park S."/>
            <person name="Wan K.H."/>
            <person name="Rubin G.M."/>
            <person name="Celniker S.E."/>
        </authorList>
    </citation>
    <scope>NUCLEOTIDE SEQUENCE [LARGE SCALE MRNA]</scope>
    <source>
        <strain>Berkeley</strain>
        <tissue>Testis</tissue>
    </source>
</reference>
<reference key="4">
    <citation type="journal article" date="2021" name="IScience">
        <title>Dissecting the concordant and disparate roles of NDUFAF3 and NDUFAF4 in mitochondrial complex I biogenesis.</title>
        <authorList>
            <person name="Murari A."/>
            <person name="Rhooms S.K."/>
            <person name="Garcia C."/>
            <person name="Liu T."/>
            <person name="Li H."/>
            <person name="Mishra B."/>
            <person name="Deshong C."/>
            <person name="Owusu-Ansah E."/>
        </authorList>
    </citation>
    <scope>FUNCTION</scope>
    <scope>INTERACTION WITH COMPLEX 1</scope>
    <scope>DISRUPTION PHENOTYPE</scope>
</reference>
<protein>
    <recommendedName>
        <fullName evidence="3">NADH dehydrogenase [ubiquinone] 1 alpha subcomplex assembly factor 4</fullName>
        <shortName evidence="2">dNDUFAF4</shortName>
    </recommendedName>
    <alternativeName>
        <fullName evidence="4">NADH:ubiquinone oxidoreductase complex assembly factor 4</fullName>
    </alternativeName>
</protein>
<gene>
    <name evidence="2 4" type="primary">NdufAF4</name>
    <name evidence="4" type="ORF">CG11722</name>
</gene>
<dbReference type="EMBL" id="AE014297">
    <property type="protein sequence ID" value="AAF54481.1"/>
    <property type="molecule type" value="Genomic_DNA"/>
</dbReference>
<dbReference type="EMBL" id="AY070793">
    <property type="protein sequence ID" value="AAL48415.1"/>
    <property type="molecule type" value="mRNA"/>
</dbReference>
<dbReference type="RefSeq" id="NP_649970.1">
    <property type="nucleotide sequence ID" value="NM_141713.4"/>
</dbReference>
<dbReference type="BioGRID" id="66382">
    <property type="interactions" value="5"/>
</dbReference>
<dbReference type="DIP" id="DIP-17212N"/>
<dbReference type="FunCoup" id="Q9VH39">
    <property type="interactions" value="566"/>
</dbReference>
<dbReference type="IntAct" id="Q9VH39">
    <property type="interactions" value="4"/>
</dbReference>
<dbReference type="STRING" id="7227.FBpp0081683"/>
<dbReference type="GlyGen" id="Q9VH39">
    <property type="glycosylation" value="1 site"/>
</dbReference>
<dbReference type="PaxDb" id="7227-FBpp0081683"/>
<dbReference type="DNASU" id="41227"/>
<dbReference type="EnsemblMetazoa" id="FBtr0082205">
    <property type="protein sequence ID" value="FBpp0081683"/>
    <property type="gene ID" value="FBgn0037777"/>
</dbReference>
<dbReference type="GeneID" id="41227"/>
<dbReference type="KEGG" id="dme:Dmel_CG11722"/>
<dbReference type="UCSC" id="CG11722-RA">
    <property type="organism name" value="d. melanogaster"/>
</dbReference>
<dbReference type="AGR" id="FB:FBgn0037777"/>
<dbReference type="FlyBase" id="FBgn0037777">
    <property type="gene designation" value="NdufAF4"/>
</dbReference>
<dbReference type="VEuPathDB" id="VectorBase:FBgn0037777"/>
<dbReference type="eggNOG" id="KOG4481">
    <property type="taxonomic scope" value="Eukaryota"/>
</dbReference>
<dbReference type="GeneTree" id="ENSGT00390000001627"/>
<dbReference type="HOGENOM" id="CLU_054693_1_0_1"/>
<dbReference type="InParanoid" id="Q9VH39"/>
<dbReference type="OMA" id="IPDQKYK"/>
<dbReference type="OrthoDB" id="2434756at2759"/>
<dbReference type="PhylomeDB" id="Q9VH39"/>
<dbReference type="Reactome" id="R-DME-6799198">
    <property type="pathway name" value="Complex I biogenesis"/>
</dbReference>
<dbReference type="BioGRID-ORCS" id="41227">
    <property type="hits" value="0 hits in 1 CRISPR screen"/>
</dbReference>
<dbReference type="GenomeRNAi" id="41227"/>
<dbReference type="PRO" id="PR:Q9VH39"/>
<dbReference type="Proteomes" id="UP000000803">
    <property type="component" value="Chromosome 3R"/>
</dbReference>
<dbReference type="Bgee" id="FBgn0037777">
    <property type="expression patterns" value="Expressed in early elongation stage spermatid (Drosophila) in testis and 96 other cell types or tissues"/>
</dbReference>
<dbReference type="GO" id="GO:0005739">
    <property type="term" value="C:mitochondrion"/>
    <property type="evidence" value="ECO:0000314"/>
    <property type="project" value="FlyBase"/>
</dbReference>
<dbReference type="GO" id="GO:0032981">
    <property type="term" value="P:mitochondrial respiratory chain complex I assembly"/>
    <property type="evidence" value="ECO:0000315"/>
    <property type="project" value="FlyBase"/>
</dbReference>
<dbReference type="InterPro" id="IPR009622">
    <property type="entry name" value="NDUFAF4"/>
</dbReference>
<dbReference type="PANTHER" id="PTHR13338:SF4">
    <property type="entry name" value="NADH DEHYDROGENASE [UBIQUINONE] 1 ALPHA SUBCOMPLEX ASSEMBLY FACTOR 4"/>
    <property type="match status" value="1"/>
</dbReference>
<dbReference type="PANTHER" id="PTHR13338">
    <property type="entry name" value="UPF0240 PROTEIN"/>
    <property type="match status" value="1"/>
</dbReference>
<dbReference type="Pfam" id="PF06784">
    <property type="entry name" value="UPF0240"/>
    <property type="match status" value="1"/>
</dbReference>
<sequence length="203" mass="23705">MGQVVSMVARRANRFNVENRAHRVLEREKPTPAPKFDSNLRDMERTLELDPKFVDKLNMKDSSLDGRLKDVYVTSQDRFIKRVQERQAAEAAADNVEQRPLPLERKTPDDFEYGYLEPNRISPGHCTLRQALKFINDHQLDPESWPAKKIANEYKLKEPLVENILHYFKTFNMYIPDQKYKDTMLTQATQPLLRVKSSSEGNP</sequence>
<comment type="function">
    <text evidence="1">Involved in the assembly of mitochondrial NADH:ubiquinone oxidoreductase complex (complex I) (PubMed:34386730). Together with NdufAF3, involved in biogenesis of complex 1 modules N, Q and P-peripheral, but not the P-distal module (PubMed:34386730). Required for recruitment of the complex I assembly factor Timmdc1 to complex 1 assembly intermediates (PubMed:34386730).</text>
</comment>
<comment type="subunit">
    <text evidence="1">Together with NdufAF3 associates with mitochondrial complex I assembly intermediates during its biogenesis.</text>
</comment>
<comment type="disruption phenotype">
    <text evidence="1">RNAi-mediated knockdown in thoracic muscles is lethal.</text>
</comment>
<comment type="similarity">
    <text evidence="3">Belongs to the NDUFAF4 family.</text>
</comment>
<feature type="chain" id="PRO_0000220990" description="NADH dehydrogenase [ubiquinone] 1 alpha subcomplex assembly factor 4">
    <location>
        <begin position="1"/>
        <end position="203"/>
    </location>
</feature>
<accession>Q9VH39</accession>
<organism evidence="5">
    <name type="scientific">Drosophila melanogaster</name>
    <name type="common">Fruit fly</name>
    <dbReference type="NCBI Taxonomy" id="7227"/>
    <lineage>
        <taxon>Eukaryota</taxon>
        <taxon>Metazoa</taxon>
        <taxon>Ecdysozoa</taxon>
        <taxon>Arthropoda</taxon>
        <taxon>Hexapoda</taxon>
        <taxon>Insecta</taxon>
        <taxon>Pterygota</taxon>
        <taxon>Neoptera</taxon>
        <taxon>Endopterygota</taxon>
        <taxon>Diptera</taxon>
        <taxon>Brachycera</taxon>
        <taxon>Muscomorpha</taxon>
        <taxon>Ephydroidea</taxon>
        <taxon>Drosophilidae</taxon>
        <taxon>Drosophila</taxon>
        <taxon>Sophophora</taxon>
    </lineage>
</organism>